<comment type="function">
    <text evidence="6">Acetyltransferase enzyme. Acetylates histones, giving a specific tag for transcriptional activation.</text>
</comment>
<comment type="catalytic activity">
    <reaction evidence="6">
        <text>L-lysyl-[protein] + acetyl-CoA = N(6)-acetyl-L-lysyl-[protein] + CoA + H(+)</text>
        <dbReference type="Rhea" id="RHEA:45948"/>
        <dbReference type="Rhea" id="RHEA-COMP:9752"/>
        <dbReference type="Rhea" id="RHEA-COMP:10731"/>
        <dbReference type="ChEBI" id="CHEBI:15378"/>
        <dbReference type="ChEBI" id="CHEBI:29969"/>
        <dbReference type="ChEBI" id="CHEBI:57287"/>
        <dbReference type="ChEBI" id="CHEBI:57288"/>
        <dbReference type="ChEBI" id="CHEBI:61930"/>
        <dbReference type="EC" id="2.3.1.48"/>
    </reaction>
</comment>
<comment type="subcellular location">
    <subcellularLocation>
        <location evidence="8">Nucleus</location>
    </subcellularLocation>
</comment>
<comment type="alternative products">
    <event type="alternative splicing"/>
    <isoform>
        <id>Q9C5X9-1</id>
        <name>1</name>
        <sequence type="displayed"/>
    </isoform>
    <isoform>
        <id>Q9C5X9-2</id>
        <name>2</name>
        <sequence type="described" ref="VSP_041112"/>
    </isoform>
</comment>
<comment type="tissue specificity">
    <text evidence="6">Rosette leaves, stems and flowers.</text>
</comment>
<comment type="developmental stage">
    <text evidence="6">Expressed in young seedlings.</text>
</comment>
<comment type="miscellaneous">
    <molecule>Isoform 2</molecule>
    <text evidence="8">Incomplete sequence.</text>
</comment>
<comment type="sequence caution" evidence="8">
    <conflict type="erroneous gene model prediction">
        <sequence resource="EMBL-CDS" id="AAC17068"/>
    </conflict>
</comment>
<feature type="chain" id="PRO_0000269740" description="Histone acetyltransferase HAC1">
    <location>
        <begin position="1"/>
        <end position="1697"/>
    </location>
</feature>
<feature type="domain" description="CBP/p300-type HAT" evidence="4">
    <location>
        <begin position="1081"/>
        <end position="1517"/>
    </location>
</feature>
<feature type="zinc finger region" description="TAZ-type 1" evidence="2">
    <location>
        <begin position="629"/>
        <end position="709"/>
    </location>
</feature>
<feature type="zinc finger region" description="PHD-type">
    <location>
        <begin position="989"/>
        <end position="1066"/>
    </location>
</feature>
<feature type="zinc finger region" description="ZZ-type 1" evidence="3">
    <location>
        <begin position="1399"/>
        <end position="1462"/>
    </location>
</feature>
<feature type="zinc finger region" description="ZZ-type 2" evidence="3">
    <location>
        <begin position="1519"/>
        <end position="1572"/>
    </location>
</feature>
<feature type="zinc finger region" description="TAZ-type 2" evidence="2">
    <location>
        <begin position="1579"/>
        <end position="1662"/>
    </location>
</feature>
<feature type="region of interest" description="Disordered" evidence="5">
    <location>
        <begin position="1"/>
        <end position="45"/>
    </location>
</feature>
<feature type="region of interest" description="Disordered" evidence="5">
    <location>
        <begin position="202"/>
        <end position="221"/>
    </location>
</feature>
<feature type="region of interest" description="Disordered" evidence="5">
    <location>
        <begin position="385"/>
        <end position="439"/>
    </location>
</feature>
<feature type="region of interest" description="Disordered" evidence="5">
    <location>
        <begin position="555"/>
        <end position="574"/>
    </location>
</feature>
<feature type="region of interest" description="Disordered" evidence="5">
    <location>
        <begin position="583"/>
        <end position="631"/>
    </location>
</feature>
<feature type="region of interest" description="Disordered" evidence="5">
    <location>
        <begin position="843"/>
        <end position="901"/>
    </location>
</feature>
<feature type="compositionally biased region" description="Polar residues" evidence="5">
    <location>
        <begin position="1"/>
        <end position="16"/>
    </location>
</feature>
<feature type="compositionally biased region" description="Low complexity" evidence="5">
    <location>
        <begin position="17"/>
        <end position="28"/>
    </location>
</feature>
<feature type="compositionally biased region" description="Low complexity" evidence="5">
    <location>
        <begin position="202"/>
        <end position="217"/>
    </location>
</feature>
<feature type="compositionally biased region" description="Polar residues" evidence="5">
    <location>
        <begin position="385"/>
        <end position="398"/>
    </location>
</feature>
<feature type="compositionally biased region" description="Low complexity" evidence="5">
    <location>
        <begin position="399"/>
        <end position="439"/>
    </location>
</feature>
<feature type="compositionally biased region" description="Polar residues" evidence="5">
    <location>
        <begin position="556"/>
        <end position="571"/>
    </location>
</feature>
<feature type="compositionally biased region" description="Polar residues" evidence="5">
    <location>
        <begin position="584"/>
        <end position="628"/>
    </location>
</feature>
<feature type="compositionally biased region" description="Basic and acidic residues" evidence="5">
    <location>
        <begin position="873"/>
        <end position="901"/>
    </location>
</feature>
<feature type="binding site" evidence="1">
    <location>
        <begin position="1204"/>
        <end position="1206"/>
    </location>
    <ligand>
        <name>acetyl-CoA</name>
        <dbReference type="ChEBI" id="CHEBI:57288"/>
    </ligand>
</feature>
<feature type="binding site" evidence="1">
    <location>
        <begin position="1223"/>
        <end position="1224"/>
    </location>
    <ligand>
        <name>acetyl-CoA</name>
        <dbReference type="ChEBI" id="CHEBI:57288"/>
    </ligand>
</feature>
<feature type="binding site" evidence="1">
    <location>
        <position position="1279"/>
    </location>
    <ligand>
        <name>acetyl-CoA</name>
        <dbReference type="ChEBI" id="CHEBI:57288"/>
    </ligand>
</feature>
<feature type="binding site" evidence="3">
    <location>
        <position position="1404"/>
    </location>
    <ligand>
        <name>Zn(2+)</name>
        <dbReference type="ChEBI" id="CHEBI:29105"/>
        <label>1</label>
    </ligand>
</feature>
<feature type="binding site" evidence="3">
    <location>
        <position position="1407"/>
    </location>
    <ligand>
        <name>Zn(2+)</name>
        <dbReference type="ChEBI" id="CHEBI:29105"/>
        <label>1</label>
    </ligand>
</feature>
<feature type="binding site" evidence="3">
    <location>
        <position position="1419"/>
    </location>
    <ligand>
        <name>Zn(2+)</name>
        <dbReference type="ChEBI" id="CHEBI:29105"/>
        <label>2</label>
    </ligand>
</feature>
<feature type="binding site" evidence="3">
    <location>
        <position position="1422"/>
    </location>
    <ligand>
        <name>Zn(2+)</name>
        <dbReference type="ChEBI" id="CHEBI:29105"/>
        <label>2</label>
    </ligand>
</feature>
<feature type="binding site" evidence="3">
    <location>
        <position position="1428"/>
    </location>
    <ligand>
        <name>Zn(2+)</name>
        <dbReference type="ChEBI" id="CHEBI:29105"/>
        <label>1</label>
    </ligand>
</feature>
<feature type="binding site" evidence="3">
    <location>
        <position position="1431"/>
    </location>
    <ligand>
        <name>Zn(2+)</name>
        <dbReference type="ChEBI" id="CHEBI:29105"/>
        <label>1</label>
    </ligand>
</feature>
<feature type="binding site" evidence="3">
    <location>
        <position position="1444"/>
    </location>
    <ligand>
        <name>Zn(2+)</name>
        <dbReference type="ChEBI" id="CHEBI:29105"/>
        <label>2</label>
    </ligand>
</feature>
<feature type="binding site" evidence="3">
    <location>
        <position position="1452"/>
    </location>
    <ligand>
        <name>Zn(2+)</name>
        <dbReference type="ChEBI" id="CHEBI:29105"/>
        <label>2</label>
    </ligand>
</feature>
<feature type="binding site" evidence="3">
    <location>
        <position position="1524"/>
    </location>
    <ligand>
        <name>Zn(2+)</name>
        <dbReference type="ChEBI" id="CHEBI:29105"/>
        <label>3</label>
    </ligand>
</feature>
<feature type="binding site" evidence="3">
    <location>
        <position position="1527"/>
    </location>
    <ligand>
        <name>Zn(2+)</name>
        <dbReference type="ChEBI" id="CHEBI:29105"/>
        <label>3</label>
    </ligand>
</feature>
<feature type="binding site" evidence="3">
    <location>
        <position position="1539"/>
    </location>
    <ligand>
        <name>Zn(2+)</name>
        <dbReference type="ChEBI" id="CHEBI:29105"/>
        <label>4</label>
    </ligand>
</feature>
<feature type="binding site" evidence="3">
    <location>
        <position position="1542"/>
    </location>
    <ligand>
        <name>Zn(2+)</name>
        <dbReference type="ChEBI" id="CHEBI:29105"/>
        <label>4</label>
    </ligand>
</feature>
<feature type="binding site" evidence="3">
    <location>
        <position position="1548"/>
    </location>
    <ligand>
        <name>Zn(2+)</name>
        <dbReference type="ChEBI" id="CHEBI:29105"/>
        <label>3</label>
    </ligand>
</feature>
<feature type="binding site" evidence="3">
    <location>
        <position position="1551"/>
    </location>
    <ligand>
        <name>Zn(2+)</name>
        <dbReference type="ChEBI" id="CHEBI:29105"/>
        <label>3</label>
    </ligand>
</feature>
<feature type="binding site" evidence="3">
    <location>
        <position position="1560"/>
    </location>
    <ligand>
        <name>Zn(2+)</name>
        <dbReference type="ChEBI" id="CHEBI:29105"/>
        <label>4</label>
    </ligand>
</feature>
<feature type="binding site" evidence="3">
    <location>
        <position position="1562"/>
    </location>
    <ligand>
        <name>Zn(2+)</name>
        <dbReference type="ChEBI" id="CHEBI:29105"/>
        <label>4</label>
    </ligand>
</feature>
<feature type="splice variant" id="VSP_041112" description="In isoform 2." evidence="7">
    <location>
        <begin position="1661"/>
        <end position="1697"/>
    </location>
</feature>
<feature type="mutagenesis site" description="Abolishes acetyltransferase activity." evidence="6">
    <original>FAY</original>
    <variation>AAA</variation>
    <location>
        <begin position="1159"/>
        <end position="1161"/>
    </location>
</feature>
<feature type="mutagenesis site" description="Abolishes acetyltransferase activity." evidence="6">
    <original>WY</original>
    <variation>AA</variation>
    <location>
        <begin position="1279"/>
        <end position="1280"/>
    </location>
</feature>
<feature type="mutagenesis site" description="3-fold decrease in acetyltransferase activity." evidence="6">
    <original>ML</original>
    <variation>AA</variation>
    <location>
        <begin position="1283"/>
        <end position="1284"/>
    </location>
</feature>
<name>HAC1_ARATH</name>
<evidence type="ECO:0000250" key="1">
    <source>
        <dbReference type="UniProtKB" id="Q09472"/>
    </source>
</evidence>
<evidence type="ECO:0000255" key="2">
    <source>
        <dbReference type="PROSITE-ProRule" id="PRU00203"/>
    </source>
</evidence>
<evidence type="ECO:0000255" key="3">
    <source>
        <dbReference type="PROSITE-ProRule" id="PRU00228"/>
    </source>
</evidence>
<evidence type="ECO:0000255" key="4">
    <source>
        <dbReference type="PROSITE-ProRule" id="PRU01065"/>
    </source>
</evidence>
<evidence type="ECO:0000256" key="5">
    <source>
        <dbReference type="SAM" id="MobiDB-lite"/>
    </source>
</evidence>
<evidence type="ECO:0000269" key="6">
    <source>
    </source>
</evidence>
<evidence type="ECO:0000303" key="7">
    <source>
    </source>
</evidence>
<evidence type="ECO:0000305" key="8"/>
<keyword id="KW-0010">Activator</keyword>
<keyword id="KW-0012">Acyltransferase</keyword>
<keyword id="KW-0025">Alternative splicing</keyword>
<keyword id="KW-0156">Chromatin regulator</keyword>
<keyword id="KW-0479">Metal-binding</keyword>
<keyword id="KW-0539">Nucleus</keyword>
<keyword id="KW-1185">Reference proteome</keyword>
<keyword id="KW-0677">Repeat</keyword>
<keyword id="KW-0804">Transcription</keyword>
<keyword id="KW-0805">Transcription regulation</keyword>
<keyword id="KW-0808">Transferase</keyword>
<keyword id="KW-0862">Zinc</keyword>
<keyword id="KW-0863">Zinc-finger</keyword>
<dbReference type="EC" id="2.3.1.48" evidence="6"/>
<dbReference type="EMBL" id="AC002986">
    <property type="protein sequence ID" value="AAC17068.1"/>
    <property type="status" value="ALT_SEQ"/>
    <property type="molecule type" value="Genomic_DNA"/>
</dbReference>
<dbReference type="EMBL" id="CP002684">
    <property type="protein sequence ID" value="AEE36191.1"/>
    <property type="molecule type" value="Genomic_DNA"/>
</dbReference>
<dbReference type="EMBL" id="AF323954">
    <property type="protein sequence ID" value="AAG60059.1"/>
    <property type="molecule type" value="mRNA"/>
</dbReference>
<dbReference type="PIR" id="T01055">
    <property type="entry name" value="T01055"/>
</dbReference>
<dbReference type="RefSeq" id="NP_565197.3">
    <molecule id="Q9C5X9-1"/>
    <property type="nucleotide sequence ID" value="NM_106550.4"/>
</dbReference>
<dbReference type="SMR" id="Q9C5X9"/>
<dbReference type="BioGRID" id="29460">
    <property type="interactions" value="16"/>
</dbReference>
<dbReference type="FunCoup" id="Q9C5X9">
    <property type="interactions" value="717"/>
</dbReference>
<dbReference type="IntAct" id="Q9C5X9">
    <property type="interactions" value="12"/>
</dbReference>
<dbReference type="STRING" id="3702.Q9C5X9"/>
<dbReference type="GlyGen" id="Q9C5X9">
    <property type="glycosylation" value="3 sites, 1 O-linked glycan (2 sites)"/>
</dbReference>
<dbReference type="iPTMnet" id="Q9C5X9"/>
<dbReference type="PaxDb" id="3702-AT1G79000.2"/>
<dbReference type="ProteomicsDB" id="230125">
    <molecule id="Q9C5X9-1"/>
</dbReference>
<dbReference type="EnsemblPlants" id="AT1G79000.1">
    <molecule id="Q9C5X9-1"/>
    <property type="protein sequence ID" value="AT1G79000.1"/>
    <property type="gene ID" value="AT1G79000"/>
</dbReference>
<dbReference type="GeneID" id="844241"/>
<dbReference type="Gramene" id="AT1G79000.1">
    <molecule id="Q9C5X9-1"/>
    <property type="protein sequence ID" value="AT1G79000.1"/>
    <property type="gene ID" value="AT1G79000"/>
</dbReference>
<dbReference type="KEGG" id="ath:AT1G79000"/>
<dbReference type="Araport" id="AT1G79000"/>
<dbReference type="TAIR" id="AT1G79000">
    <property type="gene designation" value="HAC1"/>
</dbReference>
<dbReference type="eggNOG" id="KOG1778">
    <property type="taxonomic scope" value="Eukaryota"/>
</dbReference>
<dbReference type="HOGENOM" id="CLU_002956_2_0_1"/>
<dbReference type="InParanoid" id="Q9C5X9"/>
<dbReference type="PRO" id="PR:Q9C5X9"/>
<dbReference type="Proteomes" id="UP000006548">
    <property type="component" value="Chromosome 1"/>
</dbReference>
<dbReference type="ExpressionAtlas" id="Q9C5X9">
    <property type="expression patterns" value="baseline and differential"/>
</dbReference>
<dbReference type="GO" id="GO:0005634">
    <property type="term" value="C:nucleus"/>
    <property type="evidence" value="ECO:0007669"/>
    <property type="project" value="UniProtKB-SubCell"/>
</dbReference>
<dbReference type="GO" id="GO:0004402">
    <property type="term" value="F:histone acetyltransferase activity"/>
    <property type="evidence" value="ECO:0007669"/>
    <property type="project" value="UniProtKB-EC"/>
</dbReference>
<dbReference type="GO" id="GO:0008270">
    <property type="term" value="F:zinc ion binding"/>
    <property type="evidence" value="ECO:0007669"/>
    <property type="project" value="UniProtKB-KW"/>
</dbReference>
<dbReference type="GO" id="GO:0006355">
    <property type="term" value="P:regulation of DNA-templated transcription"/>
    <property type="evidence" value="ECO:0007669"/>
    <property type="project" value="InterPro"/>
</dbReference>
<dbReference type="CDD" id="cd15614">
    <property type="entry name" value="PHD_HAC_like"/>
    <property type="match status" value="1"/>
</dbReference>
<dbReference type="CDD" id="cd02337">
    <property type="entry name" value="ZZ_CBP"/>
    <property type="match status" value="1"/>
</dbReference>
<dbReference type="FunFam" id="3.30.60.90:FF:000018">
    <property type="entry name" value="Histone acetyltransferase HAC1"/>
    <property type="match status" value="1"/>
</dbReference>
<dbReference type="FunFam" id="1.20.1020.10:FF:000003">
    <property type="entry name" value="Histone acetyltransferase HAC1-like protein"/>
    <property type="match status" value="1"/>
</dbReference>
<dbReference type="FunFam" id="1.20.1020.10:FF:000006">
    <property type="entry name" value="Histone acetyltransferase of the CBP family 12"/>
    <property type="match status" value="1"/>
</dbReference>
<dbReference type="FunFam" id="3.30.60.90:FF:000022">
    <property type="entry name" value="Histone acetyltransferase of the CBP family 12"/>
    <property type="match status" value="1"/>
</dbReference>
<dbReference type="Gene3D" id="3.30.60.90">
    <property type="match status" value="2"/>
</dbReference>
<dbReference type="Gene3D" id="1.20.1020.10">
    <property type="entry name" value="TAZ domain"/>
    <property type="match status" value="2"/>
</dbReference>
<dbReference type="Gene3D" id="3.30.40.10">
    <property type="entry name" value="Zinc/RING finger domain, C3HC4 (zinc finger)"/>
    <property type="match status" value="1"/>
</dbReference>
<dbReference type="InterPro" id="IPR031162">
    <property type="entry name" value="CBP_P300_HAT"/>
</dbReference>
<dbReference type="InterPro" id="IPR013178">
    <property type="entry name" value="Histone_AcTrfase_Rtt109/CBP"/>
</dbReference>
<dbReference type="InterPro" id="IPR035898">
    <property type="entry name" value="TAZ_dom_sf"/>
</dbReference>
<dbReference type="InterPro" id="IPR019786">
    <property type="entry name" value="Zinc_finger_PHD-type_CS"/>
</dbReference>
<dbReference type="InterPro" id="IPR011011">
    <property type="entry name" value="Znf_FYVE_PHD"/>
</dbReference>
<dbReference type="InterPro" id="IPR019787">
    <property type="entry name" value="Znf_PHD-finger"/>
</dbReference>
<dbReference type="InterPro" id="IPR013083">
    <property type="entry name" value="Znf_RING/FYVE/PHD"/>
</dbReference>
<dbReference type="InterPro" id="IPR000197">
    <property type="entry name" value="Znf_TAZ"/>
</dbReference>
<dbReference type="InterPro" id="IPR000433">
    <property type="entry name" value="Znf_ZZ"/>
</dbReference>
<dbReference type="InterPro" id="IPR043145">
    <property type="entry name" value="Znf_ZZ_sf"/>
</dbReference>
<dbReference type="PANTHER" id="PTHR13808">
    <property type="entry name" value="CBP/P300-RELATED"/>
    <property type="match status" value="1"/>
</dbReference>
<dbReference type="PANTHER" id="PTHR13808:SF1">
    <property type="entry name" value="HISTONE ACETYLTRANSFERASE"/>
    <property type="match status" value="1"/>
</dbReference>
<dbReference type="Pfam" id="PF08214">
    <property type="entry name" value="HAT_KAT11"/>
    <property type="match status" value="1"/>
</dbReference>
<dbReference type="Pfam" id="PF00628">
    <property type="entry name" value="PHD"/>
    <property type="match status" value="1"/>
</dbReference>
<dbReference type="Pfam" id="PF02135">
    <property type="entry name" value="zf-TAZ"/>
    <property type="match status" value="2"/>
</dbReference>
<dbReference type="Pfam" id="PF00569">
    <property type="entry name" value="ZZ"/>
    <property type="match status" value="1"/>
</dbReference>
<dbReference type="SMART" id="SM01250">
    <property type="entry name" value="KAT11"/>
    <property type="match status" value="1"/>
</dbReference>
<dbReference type="SMART" id="SM00551">
    <property type="entry name" value="ZnF_TAZ"/>
    <property type="match status" value="2"/>
</dbReference>
<dbReference type="SMART" id="SM00291">
    <property type="entry name" value="ZnF_ZZ"/>
    <property type="match status" value="2"/>
</dbReference>
<dbReference type="SUPFAM" id="SSF57903">
    <property type="entry name" value="FYVE/PHD zinc finger"/>
    <property type="match status" value="1"/>
</dbReference>
<dbReference type="SUPFAM" id="SSF57850">
    <property type="entry name" value="RING/U-box"/>
    <property type="match status" value="2"/>
</dbReference>
<dbReference type="SUPFAM" id="SSF57933">
    <property type="entry name" value="TAZ domain"/>
    <property type="match status" value="2"/>
</dbReference>
<dbReference type="PROSITE" id="PS51727">
    <property type="entry name" value="CBP_P300_HAT"/>
    <property type="match status" value="1"/>
</dbReference>
<dbReference type="PROSITE" id="PS01359">
    <property type="entry name" value="ZF_PHD_1"/>
    <property type="match status" value="1"/>
</dbReference>
<dbReference type="PROSITE" id="PS50134">
    <property type="entry name" value="ZF_TAZ"/>
    <property type="match status" value="2"/>
</dbReference>
<dbReference type="PROSITE" id="PS01357">
    <property type="entry name" value="ZF_ZZ_1"/>
    <property type="match status" value="1"/>
</dbReference>
<dbReference type="PROSITE" id="PS50135">
    <property type="entry name" value="ZF_ZZ_2"/>
    <property type="match status" value="2"/>
</dbReference>
<accession>Q9C5X9</accession>
<accession>O64548</accession>
<proteinExistence type="evidence at protein level"/>
<gene>
    <name type="primary">HAC1</name>
    <name type="synonym">PCAT2</name>
    <name type="ordered locus">At1g79000</name>
    <name type="ORF">YUP8H12R.38</name>
    <name type="ORF">YUP8H12R_22</name>
</gene>
<organism>
    <name type="scientific">Arabidopsis thaliana</name>
    <name type="common">Mouse-ear cress</name>
    <dbReference type="NCBI Taxonomy" id="3702"/>
    <lineage>
        <taxon>Eukaryota</taxon>
        <taxon>Viridiplantae</taxon>
        <taxon>Streptophyta</taxon>
        <taxon>Embryophyta</taxon>
        <taxon>Tracheophyta</taxon>
        <taxon>Spermatophyta</taxon>
        <taxon>Magnoliopsida</taxon>
        <taxon>eudicotyledons</taxon>
        <taxon>Gunneridae</taxon>
        <taxon>Pentapetalae</taxon>
        <taxon>rosids</taxon>
        <taxon>malvids</taxon>
        <taxon>Brassicales</taxon>
        <taxon>Brassicaceae</taxon>
        <taxon>Camelineae</taxon>
        <taxon>Arabidopsis</taxon>
    </lineage>
</organism>
<reference key="1">
    <citation type="journal article" date="2000" name="Nature">
        <title>Sequence and analysis of chromosome 1 of the plant Arabidopsis thaliana.</title>
        <authorList>
            <person name="Theologis A."/>
            <person name="Ecker J.R."/>
            <person name="Palm C.J."/>
            <person name="Federspiel N.A."/>
            <person name="Kaul S."/>
            <person name="White O."/>
            <person name="Alonso J."/>
            <person name="Altafi H."/>
            <person name="Araujo R."/>
            <person name="Bowman C.L."/>
            <person name="Brooks S.Y."/>
            <person name="Buehler E."/>
            <person name="Chan A."/>
            <person name="Chao Q."/>
            <person name="Chen H."/>
            <person name="Cheuk R.F."/>
            <person name="Chin C.W."/>
            <person name="Chung M.K."/>
            <person name="Conn L."/>
            <person name="Conway A.B."/>
            <person name="Conway A.R."/>
            <person name="Creasy T.H."/>
            <person name="Dewar K."/>
            <person name="Dunn P."/>
            <person name="Etgu P."/>
            <person name="Feldblyum T.V."/>
            <person name="Feng J.-D."/>
            <person name="Fong B."/>
            <person name="Fujii C.Y."/>
            <person name="Gill J.E."/>
            <person name="Goldsmith A.D."/>
            <person name="Haas B."/>
            <person name="Hansen N.F."/>
            <person name="Hughes B."/>
            <person name="Huizar L."/>
            <person name="Hunter J.L."/>
            <person name="Jenkins J."/>
            <person name="Johnson-Hopson C."/>
            <person name="Khan S."/>
            <person name="Khaykin E."/>
            <person name="Kim C.J."/>
            <person name="Koo H.L."/>
            <person name="Kremenetskaia I."/>
            <person name="Kurtz D.B."/>
            <person name="Kwan A."/>
            <person name="Lam B."/>
            <person name="Langin-Hooper S."/>
            <person name="Lee A."/>
            <person name="Lee J.M."/>
            <person name="Lenz C.A."/>
            <person name="Li J.H."/>
            <person name="Li Y.-P."/>
            <person name="Lin X."/>
            <person name="Liu S.X."/>
            <person name="Liu Z.A."/>
            <person name="Luros J.S."/>
            <person name="Maiti R."/>
            <person name="Marziali A."/>
            <person name="Militscher J."/>
            <person name="Miranda M."/>
            <person name="Nguyen M."/>
            <person name="Nierman W.C."/>
            <person name="Osborne B.I."/>
            <person name="Pai G."/>
            <person name="Peterson J."/>
            <person name="Pham P.K."/>
            <person name="Rizzo M."/>
            <person name="Rooney T."/>
            <person name="Rowley D."/>
            <person name="Sakano H."/>
            <person name="Salzberg S.L."/>
            <person name="Schwartz J.R."/>
            <person name="Shinn P."/>
            <person name="Southwick A.M."/>
            <person name="Sun H."/>
            <person name="Tallon L.J."/>
            <person name="Tambunga G."/>
            <person name="Toriumi M.J."/>
            <person name="Town C.D."/>
            <person name="Utterback T."/>
            <person name="Van Aken S."/>
            <person name="Vaysberg M."/>
            <person name="Vysotskaia V.S."/>
            <person name="Walker M."/>
            <person name="Wu D."/>
            <person name="Yu G."/>
            <person name="Fraser C.M."/>
            <person name="Venter J.C."/>
            <person name="Davis R.W."/>
        </authorList>
    </citation>
    <scope>NUCLEOTIDE SEQUENCE [LARGE SCALE GENOMIC DNA]</scope>
    <source>
        <strain>cv. Columbia</strain>
    </source>
</reference>
<reference key="2">
    <citation type="journal article" date="2017" name="Plant J.">
        <title>Araport11: a complete reannotation of the Arabidopsis thaliana reference genome.</title>
        <authorList>
            <person name="Cheng C.Y."/>
            <person name="Krishnakumar V."/>
            <person name="Chan A.P."/>
            <person name="Thibaud-Nissen F."/>
            <person name="Schobel S."/>
            <person name="Town C.D."/>
        </authorList>
    </citation>
    <scope>GENOME REANNOTATION</scope>
    <source>
        <strain>cv. Columbia</strain>
    </source>
</reference>
<reference key="3">
    <citation type="journal article" date="2001" name="Nucleic Acids Res.">
        <title>Plant orthologs of p300/CBP: conservation of a core domain in metazoan p300/CBP acetyltransferase-related proteins.</title>
        <authorList>
            <person name="Bordoli L."/>
            <person name="Netsch M."/>
            <person name="Luethi U."/>
            <person name="Lutz W."/>
            <person name="Eckner R."/>
        </authorList>
    </citation>
    <scope>NUCLEOTIDE SEQUENCE [MRNA] OF 7-1660 (ISOFORM 2)</scope>
    <scope>MUTAGENESIS OF 1159-PHE--TYR-1161; 1279-TRP-TYR-1280 AND 1283-MET-LEU-1284</scope>
    <scope>DEVELOPMENTAL STAGE</scope>
    <scope>TISSUE SPECIFICITY</scope>
    <scope>CATALYTIC ACTIVITY</scope>
</reference>
<reference key="4">
    <citation type="journal article" date="2002" name="Nucleic Acids Res.">
        <title>Analysis of histone acetyltransferase and histone deacetylase families of Arabidopsis thaliana suggests functional diversification of chromatin modification among multicellular eukaryotes.</title>
        <authorList>
            <person name="Pandey R."/>
            <person name="Mueller A."/>
            <person name="Napoli C.A."/>
            <person name="Selinger D.A."/>
            <person name="Pikaard C.S."/>
            <person name="Richards E.J."/>
            <person name="Bender J."/>
            <person name="Mount D.W."/>
            <person name="Jorgensen R.A."/>
        </authorList>
    </citation>
    <scope>NOMENCLATURE</scope>
</reference>
<sequence>MNVQAHMSGQVSNQGTMSQQNGNSQMQNLVGGGSAPATGAGLGPSRVSPVDNDILKLRQAMRIRIFNILQQKQPSPADEASKAKYMDVARRLEEGLFKIANTKEDYVNPSTLEPRLASLIKGRQLNNYNQRHANSSSVGTMIPTPGLQHSGGNPNLMITSSGDATMAGSNNITTSAMNTGNLLNSGGMLGGNLSNGYQHSSSNFGLGSGGNMSSMSSQRNTGQMMPTPGFVNSSTNNNSNNGQSYLSVEASNNSGGFSTAPMMVPQTQQQQLRQDIGGQNSRMLQNHGSQMGVGLRPGMQQKLSNVSNSSINGGVGMNAKSVDSGTSYTNPIRNSQQAYDNLQRSGMQGDGYGTNNSDPFGSGNLYGAVTSVGMMTNTQNANTASFQAVSRTSSSLSHQQQQFQQQPNRFQQQPNQFHQQQQQFLHQQQLKQQSQQQQRFISHDAFGQNNVASDMVTHVKHEPGMENPSESIHSQTPEQFQLSQFQNQYQNNAEDRHAGSQILPVTSQSDMCTSVPQNSQQIQQMLHPHSMASDSVNGFSNLSVGVKTESGMRGHWQSQSQEHTQMSNSMSNERHIQEDFRQRMSGTDEAQPNNMSGGSIIGQNRVSTTSESLNPQNPTATTCRNGNGNRDPRFKNQQKWLLFLRHARHCKAPEGKCPDRNCVTVQKLWKHMDSCAAPQCSYPRCLPTKTLINHHRSCKEPNCPVCIPVKAYLQQQANARSLARLKNETDAARSVNGGGISSDAVQTSAGAKSCTSPGADISGHLQPSLKRLKVEQSSQPVDVETESCKSSVVSVTEAQSSQYAERKDHKHSDVRAPSKYFEVKAEVSDFSVQTRPGFKDTKIGIAENIPKQRPVSQPDKQDLSDVSPMQETTKVEKEPESLKKENLAESTEHTSKSGKPEIKGVSLTELFTPEQVREHIRGLRQWVGQSKAKAEKNQAMEHSMSENSCQLCAVEKLTFEPPPIYCTPCGARIKRNAMYYTVGAGDTRHYFCIPCYNESRGDTILAEGTPMPKARLEKKKNDEETEEWWVQCDKCEAWQHQICALFNGRRNDGGQAEYTCPYCFIAEVEQSKRKPLPQSAVLGAKDLPRTILSDHIEQRLFKRLKQERTERARAQGKSYDEIPTAESLVIRVVSSVDKKLEVKPRFLEIFREDSYPTEFAYKSKVVLLFQKIEGVEVCLFGMYVQEFGSECAFPNQRRVYLSYLDSVKYFRPEVRSYNGEALRTFVYHEILIGYLEYCKLRGFTSCYIWACPPLKGEDYILYCHPEIQKTPKSDKLREWYLAMLRKASKEGIVAETINLYDHFFMQTGECRAKVTAARLPYFDGDYWPGAAEDLIYQMSQEEDGRKGNKKGMLKKTITKRALKASGQTDLSGNASKDLLLMHRLGETIHPMKEDFIMVHLQPSCTHCCILMVSGNRWVCSQCKHFQICDKCYEAEQRREDRERHPVNFKDKHALYPVEIMDIPADTRDKDEILESEFFDTRQAFLSLCQGNHYQYDTLRRAKHSSMMVLYHLHNPTAPAFVTTCNACHLDIETGQGWRCEVCPDYDVCNACFSRDGGVNHPHKLTNHPSLADQNAQNKEARQLRVLQLRKMLDLLVHASQCRSAHCQYPNCRKVKGLFRHGINCKVRASGGCVLCKKMWYLLQLHARACKESECHVPRCRDLKEHLRRLQQQSDSRRRAAVMEMMRQRAAEVAGGSG</sequence>
<protein>
    <recommendedName>
        <fullName>Histone acetyltransferase HAC1</fullName>
        <ecNumber evidence="6">2.3.1.48</ecNumber>
    </recommendedName>
</protein>